<dbReference type="EC" id="4.2.1.19" evidence="1"/>
<dbReference type="EMBL" id="CP000854">
    <property type="protein sequence ID" value="ACC40847.1"/>
    <property type="molecule type" value="Genomic_DNA"/>
</dbReference>
<dbReference type="RefSeq" id="WP_011739705.1">
    <property type="nucleotide sequence ID" value="NC_010612.1"/>
</dbReference>
<dbReference type="SMR" id="B2HQA4"/>
<dbReference type="STRING" id="216594.MMAR_2397"/>
<dbReference type="GeneID" id="34344143"/>
<dbReference type="KEGG" id="mmi:MMAR_2397"/>
<dbReference type="eggNOG" id="COG0131">
    <property type="taxonomic scope" value="Bacteria"/>
</dbReference>
<dbReference type="HOGENOM" id="CLU_044308_3_0_11"/>
<dbReference type="OrthoDB" id="9790411at2"/>
<dbReference type="UniPathway" id="UPA00031">
    <property type="reaction ID" value="UER00011"/>
</dbReference>
<dbReference type="Proteomes" id="UP000001190">
    <property type="component" value="Chromosome"/>
</dbReference>
<dbReference type="GO" id="GO:0005737">
    <property type="term" value="C:cytoplasm"/>
    <property type="evidence" value="ECO:0007669"/>
    <property type="project" value="UniProtKB-SubCell"/>
</dbReference>
<dbReference type="GO" id="GO:0004424">
    <property type="term" value="F:imidazoleglycerol-phosphate dehydratase activity"/>
    <property type="evidence" value="ECO:0007669"/>
    <property type="project" value="UniProtKB-UniRule"/>
</dbReference>
<dbReference type="GO" id="GO:0000105">
    <property type="term" value="P:L-histidine biosynthetic process"/>
    <property type="evidence" value="ECO:0007669"/>
    <property type="project" value="UniProtKB-UniRule"/>
</dbReference>
<dbReference type="CDD" id="cd07914">
    <property type="entry name" value="IGPD"/>
    <property type="match status" value="1"/>
</dbReference>
<dbReference type="FunFam" id="3.30.230.40:FF:000001">
    <property type="entry name" value="Imidazoleglycerol-phosphate dehydratase HisB"/>
    <property type="match status" value="1"/>
</dbReference>
<dbReference type="FunFam" id="3.30.230.40:FF:000003">
    <property type="entry name" value="Imidazoleglycerol-phosphate dehydratase HisB"/>
    <property type="match status" value="1"/>
</dbReference>
<dbReference type="Gene3D" id="3.30.230.40">
    <property type="entry name" value="Imidazole glycerol phosphate dehydratase, domain 1"/>
    <property type="match status" value="2"/>
</dbReference>
<dbReference type="HAMAP" id="MF_00076">
    <property type="entry name" value="HisB"/>
    <property type="match status" value="1"/>
</dbReference>
<dbReference type="InterPro" id="IPR038494">
    <property type="entry name" value="IGPD_sf"/>
</dbReference>
<dbReference type="InterPro" id="IPR000807">
    <property type="entry name" value="ImidazoleglycerolP_deHydtase"/>
</dbReference>
<dbReference type="InterPro" id="IPR020565">
    <property type="entry name" value="ImidazoleglycerP_deHydtase_CS"/>
</dbReference>
<dbReference type="InterPro" id="IPR020568">
    <property type="entry name" value="Ribosomal_Su5_D2-typ_SF"/>
</dbReference>
<dbReference type="NCBIfam" id="NF002110">
    <property type="entry name" value="PRK00951.1-6"/>
    <property type="match status" value="1"/>
</dbReference>
<dbReference type="NCBIfam" id="NF002111">
    <property type="entry name" value="PRK00951.2-1"/>
    <property type="match status" value="1"/>
</dbReference>
<dbReference type="NCBIfam" id="NF002114">
    <property type="entry name" value="PRK00951.2-4"/>
    <property type="match status" value="1"/>
</dbReference>
<dbReference type="PANTHER" id="PTHR23133:SF2">
    <property type="entry name" value="IMIDAZOLEGLYCEROL-PHOSPHATE DEHYDRATASE"/>
    <property type="match status" value="1"/>
</dbReference>
<dbReference type="PANTHER" id="PTHR23133">
    <property type="entry name" value="IMIDAZOLEGLYCEROL-PHOSPHATE DEHYDRATASE HIS7"/>
    <property type="match status" value="1"/>
</dbReference>
<dbReference type="Pfam" id="PF00475">
    <property type="entry name" value="IGPD"/>
    <property type="match status" value="1"/>
</dbReference>
<dbReference type="SUPFAM" id="SSF54211">
    <property type="entry name" value="Ribosomal protein S5 domain 2-like"/>
    <property type="match status" value="2"/>
</dbReference>
<dbReference type="PROSITE" id="PS00954">
    <property type="entry name" value="IGP_DEHYDRATASE_1"/>
    <property type="match status" value="1"/>
</dbReference>
<dbReference type="PROSITE" id="PS00955">
    <property type="entry name" value="IGP_DEHYDRATASE_2"/>
    <property type="match status" value="1"/>
</dbReference>
<accession>B2HQA4</accession>
<proteinExistence type="inferred from homology"/>
<protein>
    <recommendedName>
        <fullName evidence="1">Imidazoleglycerol-phosphate dehydratase</fullName>
        <shortName evidence="1">IGPD</shortName>
        <ecNumber evidence="1">4.2.1.19</ecNumber>
    </recommendedName>
</protein>
<name>HIS7_MYCMM</name>
<evidence type="ECO:0000255" key="1">
    <source>
        <dbReference type="HAMAP-Rule" id="MF_00076"/>
    </source>
</evidence>
<gene>
    <name evidence="1" type="primary">hisB</name>
    <name type="ordered locus">MMAR_2397</name>
</gene>
<reference key="1">
    <citation type="journal article" date="2008" name="Genome Res.">
        <title>Insights from the complete genome sequence of Mycobacterium marinum on the evolution of Mycobacterium tuberculosis.</title>
        <authorList>
            <person name="Stinear T.P."/>
            <person name="Seemann T."/>
            <person name="Harrison P.F."/>
            <person name="Jenkin G.A."/>
            <person name="Davies J.K."/>
            <person name="Johnson P.D."/>
            <person name="Abdellah Z."/>
            <person name="Arrowsmith C."/>
            <person name="Chillingworth T."/>
            <person name="Churcher C."/>
            <person name="Clarke K."/>
            <person name="Cronin A."/>
            <person name="Davis P."/>
            <person name="Goodhead I."/>
            <person name="Holroyd N."/>
            <person name="Jagels K."/>
            <person name="Lord A."/>
            <person name="Moule S."/>
            <person name="Mungall K."/>
            <person name="Norbertczak H."/>
            <person name="Quail M.A."/>
            <person name="Rabbinowitsch E."/>
            <person name="Walker D."/>
            <person name="White B."/>
            <person name="Whitehead S."/>
            <person name="Small P.L."/>
            <person name="Brosch R."/>
            <person name="Ramakrishnan L."/>
            <person name="Fischbach M.A."/>
            <person name="Parkhill J."/>
            <person name="Cole S.T."/>
        </authorList>
    </citation>
    <scope>NUCLEOTIDE SEQUENCE [LARGE SCALE GENOMIC DNA]</scope>
    <source>
        <strain>ATCC BAA-535 / M</strain>
    </source>
</reference>
<keyword id="KW-0028">Amino-acid biosynthesis</keyword>
<keyword id="KW-0963">Cytoplasm</keyword>
<keyword id="KW-0368">Histidine biosynthesis</keyword>
<keyword id="KW-0456">Lyase</keyword>
<keyword id="KW-1185">Reference proteome</keyword>
<organism>
    <name type="scientific">Mycobacterium marinum (strain ATCC BAA-535 / M)</name>
    <dbReference type="NCBI Taxonomy" id="216594"/>
    <lineage>
        <taxon>Bacteria</taxon>
        <taxon>Bacillati</taxon>
        <taxon>Actinomycetota</taxon>
        <taxon>Actinomycetes</taxon>
        <taxon>Mycobacteriales</taxon>
        <taxon>Mycobacteriaceae</taxon>
        <taxon>Mycobacterium</taxon>
        <taxon>Mycobacterium ulcerans group</taxon>
    </lineage>
</organism>
<feature type="chain" id="PRO_1000092703" description="Imidazoleglycerol-phosphate dehydratase">
    <location>
        <begin position="1"/>
        <end position="210"/>
    </location>
</feature>
<sequence length="210" mass="22869">MTATETGTAVRRARIERRTRESDIVIDLDLDGTGQVDVDTGVPFFDHMLTALGSHASFDLTVRTKGDVEIEAHHTVEDTAIALGQALGQALGDKKGIRRFGDAFIPMDETLAHAAVDVSGRPYCVHTGEPDHLQHTTIAGNSVPYHTVINRHVFESLAMNARIALHVRVLYGRDPHHITEAQYKAVARALRQAVEPDPRVSGVPSTKGVL</sequence>
<comment type="catalytic activity">
    <reaction evidence="1">
        <text>D-erythro-1-(imidazol-4-yl)glycerol 3-phosphate = 3-(imidazol-4-yl)-2-oxopropyl phosphate + H2O</text>
        <dbReference type="Rhea" id="RHEA:11040"/>
        <dbReference type="ChEBI" id="CHEBI:15377"/>
        <dbReference type="ChEBI" id="CHEBI:57766"/>
        <dbReference type="ChEBI" id="CHEBI:58278"/>
        <dbReference type="EC" id="4.2.1.19"/>
    </reaction>
</comment>
<comment type="pathway">
    <text evidence="1">Amino-acid biosynthesis; L-histidine biosynthesis; L-histidine from 5-phospho-alpha-D-ribose 1-diphosphate: step 6/9.</text>
</comment>
<comment type="subcellular location">
    <subcellularLocation>
        <location evidence="1">Cytoplasm</location>
    </subcellularLocation>
</comment>
<comment type="similarity">
    <text evidence="1">Belongs to the imidazoleglycerol-phosphate dehydratase family.</text>
</comment>